<sequence length="376" mass="43407">MYSVISEKISETITLQRQTSSRYIEFFVFRNVDINELWTTDISEDKTHDVWPAINEKSFKKFLENELTSYQRPISLLGIPQNGTVSKTCKREKQRETDCVNYVRKHGNPVTFYPRHRAKRNANTDTCISEEPSILVSHHRNSKMDVFMDANKITLVNRELIWVPHDQVRIVKLDISLCIPDGFFGVIIGHSNDVFCECITEIITDETDISVFLMNLSEHSLMLLPGDVEFSINFLPCYIPEPWEMINLSPPESAVFHLKTCREFIIKPNSYTIQCFDAMYVCADELKALMIPSKEIIKLGLLIETYIWNKDTIPSIKIFNSTRKTIYIPTGICIARIIFTCGHFCLSLMPERAINRLQVLDASSFFLFHYAAFSNA</sequence>
<keyword id="KW-0378">Hydrolase</keyword>
<keyword id="KW-0460">Magnesium</keyword>
<keyword id="KW-0479">Metal-binding</keyword>
<keyword id="KW-0546">Nucleotide metabolism</keyword>
<keyword id="KW-1185">Reference proteome</keyword>
<feature type="chain" id="PRO_0000182960" description="Deoxyuridine 5'-triphosphate nucleotidohydrolase">
    <location>
        <begin position="1"/>
        <end position="376"/>
    </location>
</feature>
<proteinExistence type="inferred from homology"/>
<reference key="1">
    <citation type="journal article" date="1995" name="J. Virol.">
        <title>Intragenomic linear amplification of human herpesvirus 6B oriLyt suggests acquisition of oriLyt by transposition.</title>
        <authorList>
            <person name="Stamey F.R."/>
            <person name="Dominguez G."/>
            <person name="Black J.B."/>
            <person name="Dambaugh T.R."/>
            <person name="Pellett P.E."/>
        </authorList>
    </citation>
    <scope>NUCLEOTIDE SEQUENCE [GENOMIC DNA]</scope>
</reference>
<reference key="2">
    <citation type="journal article" date="1999" name="J. Virol.">
        <title>Human herpesvirus 6B genome sequence: coding content and comparison with human herpesvirus 6A.</title>
        <authorList>
            <person name="Dominguez G."/>
            <person name="Dambaugh T.R."/>
            <person name="Stamey F.R."/>
            <person name="Dewhurst S."/>
            <person name="Inoue N."/>
            <person name="Pellett P.E."/>
        </authorList>
    </citation>
    <scope>NUCLEOTIDE SEQUENCE [LARGE SCALE GENOMIC DNA]</scope>
</reference>
<accession>P52541</accession>
<protein>
    <recommendedName>
        <fullName evidence="1">Deoxyuridine 5'-triphosphate nucleotidohydrolase</fullName>
        <shortName evidence="1">dUTPase</shortName>
        <ecNumber evidence="1">3.6.1.23</ecNumber>
    </recommendedName>
    <alternativeName>
        <fullName evidence="1">dUTP pyrophosphatase</fullName>
    </alternativeName>
</protein>
<gene>
    <name evidence="1" type="primary">DUT</name>
    <name type="ordered locus">U45</name>
</gene>
<evidence type="ECO:0000255" key="1">
    <source>
        <dbReference type="HAMAP-Rule" id="MF_04031"/>
    </source>
</evidence>
<comment type="function">
    <text evidence="1">Involved in nucleotide metabolism: produces dUMP, the immediate precursor of thymidine nucleotides and decreases the intracellular concentration of dUTP to avoid uracil incorporation into viral DNA.</text>
</comment>
<comment type="catalytic activity">
    <reaction evidence="1">
        <text>dUTP + H2O = dUMP + diphosphate + H(+)</text>
        <dbReference type="Rhea" id="RHEA:10248"/>
        <dbReference type="ChEBI" id="CHEBI:15377"/>
        <dbReference type="ChEBI" id="CHEBI:15378"/>
        <dbReference type="ChEBI" id="CHEBI:33019"/>
        <dbReference type="ChEBI" id="CHEBI:61555"/>
        <dbReference type="ChEBI" id="CHEBI:246422"/>
        <dbReference type="EC" id="3.6.1.23"/>
    </reaction>
</comment>
<comment type="cofactor">
    <cofactor evidence="1">
        <name>Mg(2+)</name>
        <dbReference type="ChEBI" id="CHEBI:18420"/>
    </cofactor>
</comment>
<comment type="similarity">
    <text evidence="1">Belongs to the dUTPase family.</text>
</comment>
<name>DUT_HHV6Z</name>
<dbReference type="EC" id="3.6.1.23" evidence="1"/>
<dbReference type="EMBL" id="AF157706">
    <property type="protein sequence ID" value="AAB06343.1"/>
    <property type="molecule type" value="Genomic_DNA"/>
</dbReference>
<dbReference type="PIR" id="T44005">
    <property type="entry name" value="T44005"/>
</dbReference>
<dbReference type="RefSeq" id="NP_050226.1">
    <property type="nucleotide sequence ID" value="NC_000898.1"/>
</dbReference>
<dbReference type="SMR" id="P52541"/>
<dbReference type="DNASU" id="1497047"/>
<dbReference type="GeneID" id="1497047"/>
<dbReference type="KEGG" id="vg:1497047"/>
<dbReference type="Proteomes" id="UP000006930">
    <property type="component" value="Segment"/>
</dbReference>
<dbReference type="GO" id="GO:0004170">
    <property type="term" value="F:dUTP diphosphatase activity"/>
    <property type="evidence" value="ECO:0007669"/>
    <property type="project" value="UniProtKB-EC"/>
</dbReference>
<dbReference type="GO" id="GO:0046872">
    <property type="term" value="F:metal ion binding"/>
    <property type="evidence" value="ECO:0007669"/>
    <property type="project" value="UniProtKB-KW"/>
</dbReference>
<dbReference type="GO" id="GO:0046080">
    <property type="term" value="P:dUTP metabolic process"/>
    <property type="evidence" value="ECO:0007669"/>
    <property type="project" value="InterPro"/>
</dbReference>
<dbReference type="Gene3D" id="2.70.40.10">
    <property type="match status" value="2"/>
</dbReference>
<dbReference type="HAMAP" id="MF_04031">
    <property type="entry name" value="HSV_DUT"/>
    <property type="match status" value="1"/>
</dbReference>
<dbReference type="InterPro" id="IPR029054">
    <property type="entry name" value="dUTPase-like"/>
</dbReference>
<dbReference type="InterPro" id="IPR036157">
    <property type="entry name" value="dUTPase-like_sf"/>
</dbReference>
<dbReference type="InterPro" id="IPR034745">
    <property type="entry name" value="HSV_DUT"/>
</dbReference>
<dbReference type="Pfam" id="PF00692">
    <property type="entry name" value="dUTPase"/>
    <property type="match status" value="1"/>
</dbReference>
<dbReference type="SUPFAM" id="SSF51283">
    <property type="entry name" value="dUTPase-like"/>
    <property type="match status" value="2"/>
</dbReference>
<organism>
    <name type="scientific">Human herpesvirus 6B (strain Z29)</name>
    <name type="common">HHV-6 variant B</name>
    <name type="synonym">Human B lymphotropic virus</name>
    <dbReference type="NCBI Taxonomy" id="36351"/>
    <lineage>
        <taxon>Viruses</taxon>
        <taxon>Duplodnaviria</taxon>
        <taxon>Heunggongvirae</taxon>
        <taxon>Peploviricota</taxon>
        <taxon>Herviviricetes</taxon>
        <taxon>Herpesvirales</taxon>
        <taxon>Orthoherpesviridae</taxon>
        <taxon>Betaherpesvirinae</taxon>
        <taxon>Roseolovirus</taxon>
        <taxon>Roseolovirus humanbeta6b</taxon>
        <taxon>Human herpesvirus 6B</taxon>
    </lineage>
</organism>
<organismHost>
    <name type="scientific">Homo sapiens</name>
    <name type="common">Human</name>
    <dbReference type="NCBI Taxonomy" id="9606"/>
</organismHost>